<evidence type="ECO:0000250" key="1">
    <source>
        <dbReference type="UniProtKB" id="P36011"/>
    </source>
</evidence>
<evidence type="ECO:0000255" key="2">
    <source>
        <dbReference type="PROSITE-ProRule" id="PRU00630"/>
    </source>
</evidence>
<evidence type="ECO:0000256" key="3">
    <source>
        <dbReference type="SAM" id="MobiDB-lite"/>
    </source>
</evidence>
<evidence type="ECO:0000269" key="4">
    <source>
    </source>
</evidence>
<evidence type="ECO:0000269" key="5">
    <source>
    </source>
</evidence>
<evidence type="ECO:0000305" key="6"/>
<feature type="chain" id="PRO_0000435984" description="Cell pattern formation-associated protein ust1">
    <location>
        <begin position="1"/>
        <end position="624"/>
    </location>
</feature>
<feature type="domain" description="HTH APSES-type" evidence="2">
    <location>
        <begin position="233"/>
        <end position="339"/>
    </location>
</feature>
<feature type="DNA-binding region" description="H-T-H motif" evidence="2">
    <location>
        <begin position="267"/>
        <end position="288"/>
    </location>
</feature>
<feature type="region of interest" description="Disordered" evidence="3">
    <location>
        <begin position="1"/>
        <end position="24"/>
    </location>
</feature>
<feature type="region of interest" description="Disordered" evidence="3">
    <location>
        <begin position="43"/>
        <end position="99"/>
    </location>
</feature>
<feature type="region of interest" description="Disordered" evidence="3">
    <location>
        <begin position="352"/>
        <end position="456"/>
    </location>
</feature>
<feature type="region of interest" description="Disordered" evidence="3">
    <location>
        <begin position="474"/>
        <end position="504"/>
    </location>
</feature>
<feature type="region of interest" description="Disordered" evidence="3">
    <location>
        <begin position="538"/>
        <end position="624"/>
    </location>
</feature>
<feature type="compositionally biased region" description="Low complexity" evidence="3">
    <location>
        <begin position="43"/>
        <end position="62"/>
    </location>
</feature>
<feature type="compositionally biased region" description="Basic residues" evidence="3">
    <location>
        <begin position="70"/>
        <end position="85"/>
    </location>
</feature>
<feature type="compositionally biased region" description="Low complexity" evidence="3">
    <location>
        <begin position="352"/>
        <end position="362"/>
    </location>
</feature>
<feature type="compositionally biased region" description="Polar residues" evidence="3">
    <location>
        <begin position="369"/>
        <end position="391"/>
    </location>
</feature>
<feature type="compositionally biased region" description="Low complexity" evidence="3">
    <location>
        <begin position="392"/>
        <end position="426"/>
    </location>
</feature>
<feature type="compositionally biased region" description="Polar residues" evidence="3">
    <location>
        <begin position="427"/>
        <end position="451"/>
    </location>
</feature>
<feature type="compositionally biased region" description="Basic and acidic residues" evidence="3">
    <location>
        <begin position="571"/>
        <end position="587"/>
    </location>
</feature>
<feature type="compositionally biased region" description="Gly residues" evidence="3">
    <location>
        <begin position="615"/>
        <end position="624"/>
    </location>
</feature>
<gene>
    <name type="primary">ust1</name>
    <name type="ORF">UMAG_15042</name>
</gene>
<sequence>MSTASPLHHGHGNGSYANSPAPTGVTGRDAGVAAAAVADSAVRSGSVPASASGSAPGSASGSMYGEAHTQHHTGHHHYSAHHTHSHGALTSPVNGGHSSSWSPYGYPAAPVYGGSPSPYGHNAYSQYASGYGYANGTAHHVATAPTTPSATSTAYHTGVNGMMMHHGQHAGYGYSSHHLGSHTPTHTHTHSSAYFMNGDGAHSHLNSSAHLTSPSYTTAPQYSTQLPLAGRHRVTTTLWEDEGTLCFQVDARGVCVARRHDNNMINGTKLLNVCGMSRGKRDGILKNEKERIVVKVGAMHLKGVWISFARAKQLAEQNGIADALYPLFEPNIQSFLYHPDNYPRTAAVIAAAQERQAQRQRAPGGQPSPGANGTSQAPPLMRANTTPSNGDTSTFSSGLSSLGSWTGSHDQGHASAPTTAQPSPSSMHNGATQMHMSLSNHGTASPTYAQSQQQQQQQQQQQQQQQQQQQQQQQQAYPMTAAQQLARPSVGDRRQSAPISLNNSVGHAENPYGATNLGGAANGGLVNGARKVSGLKRSWNDADDLNGSAAASPTERDMQRSGSGGSNGLKLDGDDLHSPDSSDDRLAKKTRGMPQRGGGATTAMPSMSTNMLMGVGNGSGIHHE</sequence>
<comment type="function">
    <text evidence="1 4 5">Transcription factor that regulates asexual reproduction (PubMed:25208341). Binds the StuA-response elements (StRE) with the consensus sequence 5'-(A/T)CGCG(T/A)N(A/C)-3' at the promoters of target genes (By similarity). Regulates dimorphism, virulence, and the sporulation program (PubMed:20064064). Required for mating, gall induction, and sporogenesis in maize tissue (PubMed:20064064). Regulates expression of the filament-down-regulated gene UM00205 and the teliospore-specific gene ssp1 (PubMed:20064064).</text>
</comment>
<comment type="subcellular location">
    <subcellularLocation>
        <location evidence="5">Nucleus</location>
    </subcellularLocation>
    <text evidence="5">Accumulates in the nucleus during teliospore germination (PubMed:25208341).</text>
</comment>
<comment type="PTM">
    <text evidence="5">Phosphorylated but is not a target of cAMP signaling (PubMed:25208341).</text>
</comment>
<comment type="disruption phenotype">
    <text evidence="4 5">Leads to filamentous growth and abolishes mating and gall induction (PubMed:20064064). In culture, produces abundant thick-walled, highly pigmented cells resembling teliospores which are normally produced only in planta (PubMed:20064064, PubMed:25208341).</text>
</comment>
<comment type="similarity">
    <text evidence="6">Belongs to the EFG1/PHD1/stuA family.</text>
</comment>
<reference key="1">
    <citation type="journal article" date="2006" name="Nature">
        <title>Insights from the genome of the biotrophic fungal plant pathogen Ustilago maydis.</title>
        <authorList>
            <person name="Kaemper J."/>
            <person name="Kahmann R."/>
            <person name="Boelker M."/>
            <person name="Ma L.-J."/>
            <person name="Brefort T."/>
            <person name="Saville B.J."/>
            <person name="Banuett F."/>
            <person name="Kronstad J.W."/>
            <person name="Gold S.E."/>
            <person name="Mueller O."/>
            <person name="Perlin M.H."/>
            <person name="Woesten H.A.B."/>
            <person name="de Vries R."/>
            <person name="Ruiz-Herrera J."/>
            <person name="Reynaga-Pena C.G."/>
            <person name="Snetselaar K."/>
            <person name="McCann M."/>
            <person name="Perez-Martin J."/>
            <person name="Feldbruegge M."/>
            <person name="Basse C.W."/>
            <person name="Steinberg G."/>
            <person name="Ibeas J.I."/>
            <person name="Holloman W."/>
            <person name="Guzman P."/>
            <person name="Farman M.L."/>
            <person name="Stajich J.E."/>
            <person name="Sentandreu R."/>
            <person name="Gonzalez-Prieto J.M."/>
            <person name="Kennell J.C."/>
            <person name="Molina L."/>
            <person name="Schirawski J."/>
            <person name="Mendoza-Mendoza A."/>
            <person name="Greilinger D."/>
            <person name="Muench K."/>
            <person name="Roessel N."/>
            <person name="Scherer M."/>
            <person name="Vranes M."/>
            <person name="Ladendorf O."/>
            <person name="Vincon V."/>
            <person name="Fuchs U."/>
            <person name="Sandrock B."/>
            <person name="Meng S."/>
            <person name="Ho E.C.H."/>
            <person name="Cahill M.J."/>
            <person name="Boyce K.J."/>
            <person name="Klose J."/>
            <person name="Klosterman S.J."/>
            <person name="Deelstra H.J."/>
            <person name="Ortiz-Castellanos L."/>
            <person name="Li W."/>
            <person name="Sanchez-Alonso P."/>
            <person name="Schreier P.H."/>
            <person name="Haeuser-Hahn I."/>
            <person name="Vaupel M."/>
            <person name="Koopmann E."/>
            <person name="Friedrich G."/>
            <person name="Voss H."/>
            <person name="Schlueter T."/>
            <person name="Margolis J."/>
            <person name="Platt D."/>
            <person name="Swimmer C."/>
            <person name="Gnirke A."/>
            <person name="Chen F."/>
            <person name="Vysotskaia V."/>
            <person name="Mannhaupt G."/>
            <person name="Gueldener U."/>
            <person name="Muensterkoetter M."/>
            <person name="Haase D."/>
            <person name="Oesterheld M."/>
            <person name="Mewes H.-W."/>
            <person name="Mauceli E.W."/>
            <person name="DeCaprio D."/>
            <person name="Wade C.M."/>
            <person name="Butler J."/>
            <person name="Young S.K."/>
            <person name="Jaffe D.B."/>
            <person name="Calvo S.E."/>
            <person name="Nusbaum C."/>
            <person name="Galagan J.E."/>
            <person name="Birren B.W."/>
        </authorList>
    </citation>
    <scope>NUCLEOTIDE SEQUENCE [LARGE SCALE GENOMIC DNA]</scope>
    <source>
        <strain>DSM 14603 / FGSC 9021 / UM521</strain>
    </source>
</reference>
<reference key="2">
    <citation type="submission" date="2014-09" db="EMBL/GenBank/DDBJ databases">
        <authorList>
            <person name="Gueldener U."/>
            <person name="Muensterkoetter M."/>
            <person name="Walter M.C."/>
            <person name="Mannhaupt G."/>
            <person name="Kahmann R."/>
        </authorList>
    </citation>
    <scope>GENOME REANNOTATION</scope>
    <source>
        <strain>DSM 14603 / FGSC 9021 / UM521</strain>
    </source>
</reference>
<reference key="3">
    <citation type="journal article" date="2010" name="Mol. Plant Microbe Interact.">
        <title>Regulation of Ustilago maydis dimorphism, sporulation, and pathogenic development by a transcription factor with a highly conserved APSES domain.</title>
        <authorList>
            <person name="Garcia-Pedrajas M.D."/>
            <person name="Baeza-Montanez L."/>
            <person name="Gold S.E."/>
        </authorList>
    </citation>
    <scope>FUNCTION</scope>
    <scope>DISRUPTION PHENOTYPE</scope>
</reference>
<reference key="4">
    <citation type="journal article" date="2015" name="Mol. Plant Microbe Interact.">
        <title>Conserved and distinct functions of the 'Stunted' (StuA)-homolog Ust1 during cell differentiation in the corn smut fungus Ustilago maydis.</title>
        <authorList>
            <person name="Baeza-Montanez L."/>
            <person name="Gold S.E."/>
            <person name="Espeso E.A."/>
            <person name="Garcia-Pedrajas M.D."/>
        </authorList>
    </citation>
    <scope>FUNCTION</scope>
    <scope>DISRUPTION PHENOTYPE</scope>
    <scope>SUBCELLULAR LOCATION</scope>
    <scope>PHOSPHORYLATION</scope>
</reference>
<proteinExistence type="evidence at protein level"/>
<protein>
    <recommendedName>
        <fullName evidence="6">Cell pattern formation-associated protein ust1</fullName>
    </recommendedName>
    <alternativeName>
        <fullName evidence="1">Stunted protein A</fullName>
    </alternativeName>
</protein>
<accession>A0A0D1CVS5</accession>
<organism>
    <name type="scientific">Mycosarcoma maydis</name>
    <name type="common">Corn smut fungus</name>
    <name type="synonym">Ustilago maydis</name>
    <dbReference type="NCBI Taxonomy" id="5270"/>
    <lineage>
        <taxon>Eukaryota</taxon>
        <taxon>Fungi</taxon>
        <taxon>Dikarya</taxon>
        <taxon>Basidiomycota</taxon>
        <taxon>Ustilaginomycotina</taxon>
        <taxon>Ustilaginomycetes</taxon>
        <taxon>Ustilaginales</taxon>
        <taxon>Ustilaginaceae</taxon>
        <taxon>Mycosarcoma</taxon>
    </lineage>
</organism>
<dbReference type="EMBL" id="CM003142">
    <property type="protein sequence ID" value="KIS70488.1"/>
    <property type="molecule type" value="Genomic_DNA"/>
</dbReference>
<dbReference type="RefSeq" id="XP_011388143.1">
    <property type="nucleotide sequence ID" value="XM_011389841.1"/>
</dbReference>
<dbReference type="SMR" id="A0A0D1CVS5"/>
<dbReference type="STRING" id="237631.A0A0D1CVS5"/>
<dbReference type="EnsemblFungi" id="KIS70488">
    <property type="protein sequence ID" value="KIS70488"/>
    <property type="gene ID" value="UMAG_15042"/>
</dbReference>
<dbReference type="GeneID" id="23568133"/>
<dbReference type="KEGG" id="uma:UMAG_15042"/>
<dbReference type="VEuPathDB" id="FungiDB:UMAG_15042"/>
<dbReference type="InParanoid" id="A0A0D1CVS5"/>
<dbReference type="OrthoDB" id="5407653at2759"/>
<dbReference type="Proteomes" id="UP000000561">
    <property type="component" value="Chromosome 3"/>
</dbReference>
<dbReference type="GO" id="GO:0005634">
    <property type="term" value="C:nucleus"/>
    <property type="evidence" value="ECO:0000318"/>
    <property type="project" value="GO_Central"/>
</dbReference>
<dbReference type="GO" id="GO:0003700">
    <property type="term" value="F:DNA-binding transcription factor activity"/>
    <property type="evidence" value="ECO:0000318"/>
    <property type="project" value="GO_Central"/>
</dbReference>
<dbReference type="GO" id="GO:0043565">
    <property type="term" value="F:sequence-specific DNA binding"/>
    <property type="evidence" value="ECO:0000318"/>
    <property type="project" value="GO_Central"/>
</dbReference>
<dbReference type="GO" id="GO:0048315">
    <property type="term" value="P:conidium formation"/>
    <property type="evidence" value="ECO:0007669"/>
    <property type="project" value="UniProtKB-KW"/>
</dbReference>
<dbReference type="GO" id="GO:0045944">
    <property type="term" value="P:positive regulation of transcription by RNA polymerase II"/>
    <property type="evidence" value="ECO:0000318"/>
    <property type="project" value="GO_Central"/>
</dbReference>
<dbReference type="GO" id="GO:0030435">
    <property type="term" value="P:sporulation resulting in formation of a cellular spore"/>
    <property type="evidence" value="ECO:0007669"/>
    <property type="project" value="UniProtKB-KW"/>
</dbReference>
<dbReference type="FunFam" id="3.10.260.10:FF:000003">
    <property type="entry name" value="Ascospore maturation 1 protein"/>
    <property type="match status" value="1"/>
</dbReference>
<dbReference type="Gene3D" id="3.10.260.10">
    <property type="entry name" value="Transcription regulator HTH, APSES-type DNA-binding domain"/>
    <property type="match status" value="1"/>
</dbReference>
<dbReference type="InterPro" id="IPR029790">
    <property type="entry name" value="EFG1/Phd1/StuA"/>
</dbReference>
<dbReference type="InterPro" id="IPR036887">
    <property type="entry name" value="HTH_APSES_sf"/>
</dbReference>
<dbReference type="InterPro" id="IPR018004">
    <property type="entry name" value="KilA/APSES_HTH"/>
</dbReference>
<dbReference type="InterPro" id="IPR003163">
    <property type="entry name" value="Tscrpt_reg_HTH_APSES-type"/>
</dbReference>
<dbReference type="PANTHER" id="PTHR47792">
    <property type="entry name" value="PROTEIN SOK2-RELATED"/>
    <property type="match status" value="1"/>
</dbReference>
<dbReference type="PANTHER" id="PTHR47792:SF1">
    <property type="entry name" value="PROTEIN SOK2-RELATED"/>
    <property type="match status" value="1"/>
</dbReference>
<dbReference type="Pfam" id="PF04383">
    <property type="entry name" value="KilA-N"/>
    <property type="match status" value="1"/>
</dbReference>
<dbReference type="SMART" id="SM01252">
    <property type="entry name" value="KilA-N"/>
    <property type="match status" value="1"/>
</dbReference>
<dbReference type="SUPFAM" id="SSF54616">
    <property type="entry name" value="DNA-binding domain of Mlu1-box binding protein MBP1"/>
    <property type="match status" value="1"/>
</dbReference>
<dbReference type="PROSITE" id="PS51299">
    <property type="entry name" value="HTH_APSES"/>
    <property type="match status" value="1"/>
</dbReference>
<name>STUA_MYCMD</name>
<keyword id="KW-0183">Conidiation</keyword>
<keyword id="KW-0238">DNA-binding</keyword>
<keyword id="KW-0539">Nucleus</keyword>
<keyword id="KW-0597">Phosphoprotein</keyword>
<keyword id="KW-1185">Reference proteome</keyword>
<keyword id="KW-0749">Sporulation</keyword>
<keyword id="KW-0804">Transcription</keyword>
<keyword id="KW-0805">Transcription regulation</keyword>